<sequence length="130" mass="13676">MAPQSKRSGGRKQKKHVPNGVAHIQSTFNNTIVTISDASGDVVSWASAGSSGFKGAKKGTPFAAQTASESAARRAMDQGMRQIEVMVSGPGAGRETAIRALQGAGLEITLIRDVTPIPHNGCRPPKRRRV</sequence>
<proteinExistence type="inferred from homology"/>
<reference key="1">
    <citation type="journal article" date="2008" name="Proc. Natl. Acad. Sci. U.S.A.">
        <title>Niche adaptation and genome expansion in the chlorophyll d-producing cyanobacterium Acaryochloris marina.</title>
        <authorList>
            <person name="Swingley W.D."/>
            <person name="Chen M."/>
            <person name="Cheung P.C."/>
            <person name="Conrad A.L."/>
            <person name="Dejesa L.C."/>
            <person name="Hao J."/>
            <person name="Honchak B.M."/>
            <person name="Karbach L.E."/>
            <person name="Kurdoglu A."/>
            <person name="Lahiri S."/>
            <person name="Mastrian S.D."/>
            <person name="Miyashita H."/>
            <person name="Page L."/>
            <person name="Ramakrishna P."/>
            <person name="Satoh S."/>
            <person name="Sattley W.M."/>
            <person name="Shimada Y."/>
            <person name="Taylor H.L."/>
            <person name="Tomo T."/>
            <person name="Tsuchiya T."/>
            <person name="Wang Z.T."/>
            <person name="Raymond J."/>
            <person name="Mimuro M."/>
            <person name="Blankenship R.E."/>
            <person name="Touchman J.W."/>
        </authorList>
    </citation>
    <scope>NUCLEOTIDE SEQUENCE [LARGE SCALE GENOMIC DNA]</scope>
    <source>
        <strain>MBIC 11017</strain>
    </source>
</reference>
<gene>
    <name evidence="1" type="primary">rpsK</name>
    <name evidence="1" type="synonym">rps11</name>
    <name type="ordered locus">AM1_1254</name>
</gene>
<keyword id="KW-1185">Reference proteome</keyword>
<keyword id="KW-0687">Ribonucleoprotein</keyword>
<keyword id="KW-0689">Ribosomal protein</keyword>
<keyword id="KW-0694">RNA-binding</keyword>
<keyword id="KW-0699">rRNA-binding</keyword>
<accession>B0C431</accession>
<organism>
    <name type="scientific">Acaryochloris marina (strain MBIC 11017)</name>
    <dbReference type="NCBI Taxonomy" id="329726"/>
    <lineage>
        <taxon>Bacteria</taxon>
        <taxon>Bacillati</taxon>
        <taxon>Cyanobacteriota</taxon>
        <taxon>Cyanophyceae</taxon>
        <taxon>Acaryochloridales</taxon>
        <taxon>Acaryochloridaceae</taxon>
        <taxon>Acaryochloris</taxon>
    </lineage>
</organism>
<protein>
    <recommendedName>
        <fullName evidence="1">Small ribosomal subunit protein uS11</fullName>
    </recommendedName>
    <alternativeName>
        <fullName evidence="3">30S ribosomal protein S11</fullName>
    </alternativeName>
</protein>
<comment type="function">
    <text evidence="1">Located on the platform of the 30S subunit, it bridges several disparate RNA helices of the 16S rRNA. Forms part of the Shine-Dalgarno cleft in the 70S ribosome.</text>
</comment>
<comment type="subunit">
    <text evidence="1">Part of the 30S ribosomal subunit. Interacts with proteins S7 and S18. Binds to IF-3.</text>
</comment>
<comment type="similarity">
    <text evidence="1">Belongs to the universal ribosomal protein uS11 family.</text>
</comment>
<evidence type="ECO:0000255" key="1">
    <source>
        <dbReference type="HAMAP-Rule" id="MF_01310"/>
    </source>
</evidence>
<evidence type="ECO:0000256" key="2">
    <source>
        <dbReference type="SAM" id="MobiDB-lite"/>
    </source>
</evidence>
<evidence type="ECO:0000305" key="3"/>
<dbReference type="EMBL" id="CP000828">
    <property type="protein sequence ID" value="ABW26291.1"/>
    <property type="molecule type" value="Genomic_DNA"/>
</dbReference>
<dbReference type="RefSeq" id="WP_010480577.1">
    <property type="nucleotide sequence ID" value="NC_009925.1"/>
</dbReference>
<dbReference type="SMR" id="B0C431"/>
<dbReference type="STRING" id="329726.AM1_1254"/>
<dbReference type="KEGG" id="amr:AM1_1254"/>
<dbReference type="eggNOG" id="COG0100">
    <property type="taxonomic scope" value="Bacteria"/>
</dbReference>
<dbReference type="HOGENOM" id="CLU_072439_5_0_3"/>
<dbReference type="OrthoDB" id="9806415at2"/>
<dbReference type="Proteomes" id="UP000000268">
    <property type="component" value="Chromosome"/>
</dbReference>
<dbReference type="GO" id="GO:1990904">
    <property type="term" value="C:ribonucleoprotein complex"/>
    <property type="evidence" value="ECO:0007669"/>
    <property type="project" value="UniProtKB-KW"/>
</dbReference>
<dbReference type="GO" id="GO:0005840">
    <property type="term" value="C:ribosome"/>
    <property type="evidence" value="ECO:0007669"/>
    <property type="project" value="UniProtKB-KW"/>
</dbReference>
<dbReference type="GO" id="GO:0019843">
    <property type="term" value="F:rRNA binding"/>
    <property type="evidence" value="ECO:0007669"/>
    <property type="project" value="UniProtKB-UniRule"/>
</dbReference>
<dbReference type="GO" id="GO:0003735">
    <property type="term" value="F:structural constituent of ribosome"/>
    <property type="evidence" value="ECO:0007669"/>
    <property type="project" value="InterPro"/>
</dbReference>
<dbReference type="GO" id="GO:0006412">
    <property type="term" value="P:translation"/>
    <property type="evidence" value="ECO:0007669"/>
    <property type="project" value="UniProtKB-UniRule"/>
</dbReference>
<dbReference type="FunFam" id="3.30.420.80:FF:000001">
    <property type="entry name" value="30S ribosomal protein S11"/>
    <property type="match status" value="1"/>
</dbReference>
<dbReference type="Gene3D" id="3.30.420.80">
    <property type="entry name" value="Ribosomal protein S11"/>
    <property type="match status" value="1"/>
</dbReference>
<dbReference type="HAMAP" id="MF_01310">
    <property type="entry name" value="Ribosomal_uS11"/>
    <property type="match status" value="1"/>
</dbReference>
<dbReference type="InterPro" id="IPR001971">
    <property type="entry name" value="Ribosomal_uS11"/>
</dbReference>
<dbReference type="InterPro" id="IPR019981">
    <property type="entry name" value="Ribosomal_uS11_bac-type"/>
</dbReference>
<dbReference type="InterPro" id="IPR018102">
    <property type="entry name" value="Ribosomal_uS11_CS"/>
</dbReference>
<dbReference type="InterPro" id="IPR036967">
    <property type="entry name" value="Ribosomal_uS11_sf"/>
</dbReference>
<dbReference type="NCBIfam" id="NF003698">
    <property type="entry name" value="PRK05309.1"/>
    <property type="match status" value="1"/>
</dbReference>
<dbReference type="NCBIfam" id="TIGR03632">
    <property type="entry name" value="uS11_bact"/>
    <property type="match status" value="1"/>
</dbReference>
<dbReference type="PANTHER" id="PTHR11759">
    <property type="entry name" value="40S RIBOSOMAL PROTEIN S14/30S RIBOSOMAL PROTEIN S11"/>
    <property type="match status" value="1"/>
</dbReference>
<dbReference type="Pfam" id="PF00411">
    <property type="entry name" value="Ribosomal_S11"/>
    <property type="match status" value="1"/>
</dbReference>
<dbReference type="PIRSF" id="PIRSF002131">
    <property type="entry name" value="Ribosomal_S11"/>
    <property type="match status" value="1"/>
</dbReference>
<dbReference type="SUPFAM" id="SSF53137">
    <property type="entry name" value="Translational machinery components"/>
    <property type="match status" value="1"/>
</dbReference>
<dbReference type="PROSITE" id="PS00054">
    <property type="entry name" value="RIBOSOMAL_S11"/>
    <property type="match status" value="1"/>
</dbReference>
<feature type="chain" id="PRO_1000086174" description="Small ribosomal subunit protein uS11">
    <location>
        <begin position="1"/>
        <end position="130"/>
    </location>
</feature>
<feature type="region of interest" description="Disordered" evidence="2">
    <location>
        <begin position="1"/>
        <end position="21"/>
    </location>
</feature>
<feature type="compositionally biased region" description="Basic residues" evidence="2">
    <location>
        <begin position="8"/>
        <end position="17"/>
    </location>
</feature>
<name>RS11_ACAM1</name>